<reference evidence="6 7" key="1">
    <citation type="journal article" date="2008" name="Proc. Natl. Acad. Sci. U.S.A.">
        <title>Ghrelin octanoylation mediated by an orphan lipid transferase.</title>
        <authorList>
            <person name="Gutierrez J.A."/>
            <person name="Solenberg P.J."/>
            <person name="Perkins D.R."/>
            <person name="Willency J.A."/>
            <person name="Knierman M.D."/>
            <person name="Jin Z."/>
            <person name="Witcher D.R."/>
            <person name="Luo S."/>
            <person name="Onyia J.E."/>
            <person name="Hale J.E."/>
        </authorList>
    </citation>
    <scope>NUCLEOTIDE SEQUENCE [MRNA]</scope>
    <scope>FUNCTION</scope>
    <scope>CATALYTIC ACTIVITY</scope>
    <source>
        <strain evidence="7">Sprague-Dawley</strain>
    </source>
</reference>
<evidence type="ECO:0000250" key="1">
    <source>
        <dbReference type="UniProtKB" id="P0C7A3"/>
    </source>
</evidence>
<evidence type="ECO:0000250" key="2">
    <source>
        <dbReference type="UniProtKB" id="Q96T53"/>
    </source>
</evidence>
<evidence type="ECO:0000255" key="3"/>
<evidence type="ECO:0000269" key="4">
    <source>
    </source>
</evidence>
<evidence type="ECO:0000303" key="5">
    <source>
    </source>
</evidence>
<evidence type="ECO:0000305" key="6"/>
<evidence type="ECO:0000312" key="7">
    <source>
        <dbReference type="EMBL" id="ACB05875.1"/>
    </source>
</evidence>
<evidence type="ECO:0000312" key="8">
    <source>
        <dbReference type="RGD" id="1566335"/>
    </source>
</evidence>
<accession>B1Q005</accession>
<gene>
    <name evidence="7 8" type="primary">Mboat4</name>
    <name evidence="5" type="synonym">Goat</name>
</gene>
<protein>
    <recommendedName>
        <fullName evidence="2">Membrane-bound ghrelin O-acyltransferase MBOAT4</fullName>
        <ecNumber evidence="4">2.3.1.-</ecNumber>
    </recommendedName>
    <alternativeName>
        <fullName evidence="8">Membrane-bound O-acyltransferase domain-containing protein 4</fullName>
    </alternativeName>
</protein>
<sequence>MDWLQFFFLHPVSLYQGAAFPFALLFNYLCITESFPTRARYLFLLAGGGVLALAAMGPYALLIFIPALCAVAMISSLSPQEVHGLTFFFQMGWQTLCHLGLHYKEYYLCEPPPVRFYITLSSLMLLTQRVTSLSLDISEGKVEAAWRGTRSRSSLCEHLWDALPYISYLLFFPALLGGSLCSFQRFQACVQRPRSLYPSISFWALTWRGLQILGLECLKVALRRVVSAGAGLDDCQRLECIYIMWSTAGLFKLTYYSHWILDDSLLHAAGFGSEAGQRPGEERYVPDVDIWTLETTHRISLFARQWNRSTAQWLKRLVFQRSRRWPVLQTFAFSAWWHGLHPGQVFGFLCWSVMVKADYLIHTFANGCIRSWPLRLLYRSLTWAHTQIIIAYVMLAVEGRSFSSLCRLCCSYNSIFPVTYCLLLFLLARRKHKCN</sequence>
<comment type="function">
    <text evidence="2 4">Catalyzes ghrelin acylation at 'Ser-3' using preferentially octanoyl-CoA, hexanoyl-CoA and decanoyl-CoA as acyl-CoA donors leading to ghrelin activity (By similarity) (PubMed:18443287). In vitro uses also acyl-CoA donors of different lengths from short-chain (C2) to long-chain fatty acids (C16) knowing that acyl-CoA donors from butanoyl-CoA (C4) to dodecanoyl-CoA (C12) are more efficient compared to longer acyl-CoA donors, such as myristoyl-CoA (C14) and palmitoyl-CoA (C16) that are not efficient (By similarity).</text>
</comment>
<comment type="catalytic activity">
    <reaction evidence="4">
        <text>octanoyl-CoA + L-seryl-[protein] = O-octanoyl-L-seryl-[protein] + CoA</text>
        <dbReference type="Rhea" id="RHEA:59964"/>
        <dbReference type="Rhea" id="RHEA-COMP:9863"/>
        <dbReference type="Rhea" id="RHEA-COMP:15484"/>
        <dbReference type="ChEBI" id="CHEBI:29999"/>
        <dbReference type="ChEBI" id="CHEBI:57287"/>
        <dbReference type="ChEBI" id="CHEBI:57386"/>
        <dbReference type="ChEBI" id="CHEBI:143548"/>
    </reaction>
    <physiologicalReaction direction="left-to-right" evidence="4">
        <dbReference type="Rhea" id="RHEA:59965"/>
    </physiologicalReaction>
</comment>
<comment type="catalytic activity">
    <reaction evidence="2">
        <text>decanoyl-CoA + L-seryl-[protein] = O-decanoyl-L-seryl-[protein] + CoA</text>
        <dbReference type="Rhea" id="RHEA:59972"/>
        <dbReference type="Rhea" id="RHEA-COMP:9863"/>
        <dbReference type="Rhea" id="RHEA-COMP:15486"/>
        <dbReference type="ChEBI" id="CHEBI:29999"/>
        <dbReference type="ChEBI" id="CHEBI:57287"/>
        <dbReference type="ChEBI" id="CHEBI:61430"/>
        <dbReference type="ChEBI" id="CHEBI:143549"/>
    </reaction>
    <physiologicalReaction direction="left-to-right" evidence="2">
        <dbReference type="Rhea" id="RHEA:59973"/>
    </physiologicalReaction>
</comment>
<comment type="catalytic activity">
    <reaction evidence="2">
        <text>L-seryl-[protein] + acetyl-CoA = O-acetyl-L-seryl-[protein] + CoA</text>
        <dbReference type="Rhea" id="RHEA:59392"/>
        <dbReference type="Rhea" id="RHEA-COMP:9863"/>
        <dbReference type="Rhea" id="RHEA-COMP:15352"/>
        <dbReference type="ChEBI" id="CHEBI:29999"/>
        <dbReference type="ChEBI" id="CHEBI:57287"/>
        <dbReference type="ChEBI" id="CHEBI:57288"/>
        <dbReference type="ChEBI" id="CHEBI:141128"/>
    </reaction>
    <physiologicalReaction direction="left-to-right" evidence="2">
        <dbReference type="Rhea" id="RHEA:59393"/>
    </physiologicalReaction>
</comment>
<comment type="catalytic activity">
    <reaction evidence="2">
        <text>L-seryl-[protein] + butanoyl-CoA = O-butanoyl-L-seryl-[protein] + CoA</text>
        <dbReference type="Rhea" id="RHEA:68276"/>
        <dbReference type="Rhea" id="RHEA-COMP:9863"/>
        <dbReference type="Rhea" id="RHEA-COMP:17461"/>
        <dbReference type="ChEBI" id="CHEBI:29999"/>
        <dbReference type="ChEBI" id="CHEBI:57287"/>
        <dbReference type="ChEBI" id="CHEBI:57371"/>
        <dbReference type="ChEBI" id="CHEBI:177287"/>
    </reaction>
    <physiologicalReaction direction="left-to-right" evidence="2">
        <dbReference type="Rhea" id="RHEA:68277"/>
    </physiologicalReaction>
</comment>
<comment type="catalytic activity">
    <reaction evidence="2">
        <text>pentanoyl-CoA + L-seryl-[protein] = O-pentanoyl-L-seryl-[protein] + CoA</text>
        <dbReference type="Rhea" id="RHEA:68280"/>
        <dbReference type="Rhea" id="RHEA-COMP:9863"/>
        <dbReference type="Rhea" id="RHEA-COMP:17462"/>
        <dbReference type="ChEBI" id="CHEBI:29999"/>
        <dbReference type="ChEBI" id="CHEBI:57287"/>
        <dbReference type="ChEBI" id="CHEBI:57389"/>
        <dbReference type="ChEBI" id="CHEBI:177288"/>
    </reaction>
    <physiologicalReaction direction="left-to-right" evidence="2">
        <dbReference type="Rhea" id="RHEA:68281"/>
    </physiologicalReaction>
</comment>
<comment type="catalytic activity">
    <reaction evidence="2">
        <text>hexanoyl-CoA + L-seryl-[protein] = O-hexanoyl-L-seryl-[protein] + CoA</text>
        <dbReference type="Rhea" id="RHEA:68284"/>
        <dbReference type="Rhea" id="RHEA-COMP:9863"/>
        <dbReference type="Rhea" id="RHEA-COMP:17463"/>
        <dbReference type="ChEBI" id="CHEBI:29999"/>
        <dbReference type="ChEBI" id="CHEBI:57287"/>
        <dbReference type="ChEBI" id="CHEBI:62620"/>
        <dbReference type="ChEBI" id="CHEBI:177289"/>
    </reaction>
    <physiologicalReaction direction="left-to-right" evidence="2">
        <dbReference type="Rhea" id="RHEA:68285"/>
    </physiologicalReaction>
</comment>
<comment type="catalytic activity">
    <reaction evidence="2">
        <text>heptanoyl-CoA + L-seryl-[protein] = O-heptanoyl-L-seryl-[protein] + CoA</text>
        <dbReference type="Rhea" id="RHEA:68288"/>
        <dbReference type="Rhea" id="RHEA-COMP:9863"/>
        <dbReference type="Rhea" id="RHEA-COMP:17464"/>
        <dbReference type="ChEBI" id="CHEBI:29999"/>
        <dbReference type="ChEBI" id="CHEBI:57287"/>
        <dbReference type="ChEBI" id="CHEBI:78811"/>
        <dbReference type="ChEBI" id="CHEBI:177290"/>
    </reaction>
    <physiologicalReaction direction="left-to-right" evidence="2">
        <dbReference type="Rhea" id="RHEA:68289"/>
    </physiologicalReaction>
</comment>
<comment type="catalytic activity">
    <reaction evidence="2">
        <text>nonanoyl-CoA + L-seryl-[protein] = O-nonanoyl-L-seryl-[protein] + CoA</text>
        <dbReference type="Rhea" id="RHEA:68292"/>
        <dbReference type="Rhea" id="RHEA-COMP:9863"/>
        <dbReference type="Rhea" id="RHEA-COMP:17465"/>
        <dbReference type="ChEBI" id="CHEBI:29999"/>
        <dbReference type="ChEBI" id="CHEBI:57287"/>
        <dbReference type="ChEBI" id="CHEBI:76291"/>
        <dbReference type="ChEBI" id="CHEBI:177291"/>
    </reaction>
    <physiologicalReaction direction="left-to-right" evidence="2">
        <dbReference type="Rhea" id="RHEA:68293"/>
    </physiologicalReaction>
</comment>
<comment type="catalytic activity">
    <reaction evidence="2">
        <text>L-seryl-[protein] + dodecanoyl-CoA = O-dodecanoyl-L-seryl-[protein] + CoA</text>
        <dbReference type="Rhea" id="RHEA:68296"/>
        <dbReference type="Rhea" id="RHEA-COMP:9863"/>
        <dbReference type="Rhea" id="RHEA-COMP:17466"/>
        <dbReference type="ChEBI" id="CHEBI:29999"/>
        <dbReference type="ChEBI" id="CHEBI:57287"/>
        <dbReference type="ChEBI" id="CHEBI:57375"/>
        <dbReference type="ChEBI" id="CHEBI:177292"/>
    </reaction>
    <physiologicalReaction direction="left-to-right" evidence="2">
        <dbReference type="Rhea" id="RHEA:68297"/>
    </physiologicalReaction>
</comment>
<comment type="catalytic activity">
    <reaction evidence="2">
        <text>L-seryl-[protein] + tetradecanoyl-CoA = O-tetradecanoyl-L-seryl-[protein] + CoA</text>
        <dbReference type="Rhea" id="RHEA:68300"/>
        <dbReference type="Rhea" id="RHEA-COMP:9863"/>
        <dbReference type="Rhea" id="RHEA-COMP:17467"/>
        <dbReference type="ChEBI" id="CHEBI:29999"/>
        <dbReference type="ChEBI" id="CHEBI:57287"/>
        <dbReference type="ChEBI" id="CHEBI:57385"/>
        <dbReference type="ChEBI" id="CHEBI:177293"/>
    </reaction>
    <physiologicalReaction direction="left-to-right" evidence="2">
        <dbReference type="Rhea" id="RHEA:68301"/>
    </physiologicalReaction>
</comment>
<comment type="catalytic activity">
    <reaction evidence="2">
        <text>a fatty acyl-CoA + L-seryl-[protein] = O-fatty acyl-L-seryl-[protein] + CoA</text>
        <dbReference type="Rhea" id="RHEA:68272"/>
        <dbReference type="Rhea" id="RHEA-COMP:9863"/>
        <dbReference type="Rhea" id="RHEA-COMP:17460"/>
        <dbReference type="ChEBI" id="CHEBI:29999"/>
        <dbReference type="ChEBI" id="CHEBI:57287"/>
        <dbReference type="ChEBI" id="CHEBI:77636"/>
        <dbReference type="ChEBI" id="CHEBI:177286"/>
    </reaction>
    <physiologicalReaction direction="left-to-right" evidence="2">
        <dbReference type="Rhea" id="RHEA:68273"/>
    </physiologicalReaction>
</comment>
<comment type="subunit">
    <text evidence="1">Monomer.</text>
</comment>
<comment type="subcellular location">
    <subcellularLocation>
        <location evidence="1">Endoplasmic reticulum membrane</location>
        <topology evidence="1">Multi-pass membrane protein</topology>
    </subcellularLocation>
</comment>
<comment type="PTM">
    <text evidence="1">Not glycosylated.</text>
</comment>
<comment type="similarity">
    <text evidence="3">Belongs to the membrane-bound acyltransferase family.</text>
</comment>
<keyword id="KW-0012">Acyltransferase</keyword>
<keyword id="KW-0256">Endoplasmic reticulum</keyword>
<keyword id="KW-0472">Membrane</keyword>
<keyword id="KW-1185">Reference proteome</keyword>
<keyword id="KW-0808">Transferase</keyword>
<keyword id="KW-0812">Transmembrane</keyword>
<keyword id="KW-1133">Transmembrane helix</keyword>
<dbReference type="EC" id="2.3.1.-" evidence="4"/>
<dbReference type="EMBL" id="EU518497">
    <property type="protein sequence ID" value="ACB05875.1"/>
    <property type="molecule type" value="mRNA"/>
</dbReference>
<dbReference type="RefSeq" id="NP_001100787.2">
    <property type="nucleotide sequence ID" value="NM_001107317.3"/>
</dbReference>
<dbReference type="RefSeq" id="XP_017455622.1">
    <property type="nucleotide sequence ID" value="XM_017600133.3"/>
</dbReference>
<dbReference type="SMR" id="B1Q005"/>
<dbReference type="FunCoup" id="B1Q005">
    <property type="interactions" value="2"/>
</dbReference>
<dbReference type="STRING" id="10116.ENSRNOP00000046106"/>
<dbReference type="SwissLipids" id="SLP:000001958"/>
<dbReference type="PhosphoSitePlus" id="B1Q005"/>
<dbReference type="PaxDb" id="10116-ENSRNOP00000046106"/>
<dbReference type="Ensembl" id="ENSRNOT00000042003.4">
    <property type="protein sequence ID" value="ENSRNOP00000046106.3"/>
    <property type="gene ID" value="ENSRNOG00000030102.4"/>
</dbReference>
<dbReference type="GeneID" id="306515"/>
<dbReference type="KEGG" id="rno:306515"/>
<dbReference type="UCSC" id="RGD:1566335">
    <property type="organism name" value="rat"/>
</dbReference>
<dbReference type="AGR" id="RGD:1566335"/>
<dbReference type="CTD" id="619373"/>
<dbReference type="RGD" id="1566335">
    <property type="gene designation" value="Mboat4"/>
</dbReference>
<dbReference type="eggNOG" id="KOG2704">
    <property type="taxonomic scope" value="Eukaryota"/>
</dbReference>
<dbReference type="GeneTree" id="ENSGT01030000234564"/>
<dbReference type="HOGENOM" id="CLU_011340_3_1_1"/>
<dbReference type="InParanoid" id="B1Q005"/>
<dbReference type="OMA" id="MDWLQLF"/>
<dbReference type="OrthoDB" id="46756at9989"/>
<dbReference type="PhylomeDB" id="B1Q005"/>
<dbReference type="TreeFam" id="TF314906"/>
<dbReference type="Reactome" id="R-RNO-422085">
    <property type="pathway name" value="Synthesis, secretion, and deacylation of Ghrelin"/>
</dbReference>
<dbReference type="PRO" id="PR:B1Q005"/>
<dbReference type="Proteomes" id="UP000002494">
    <property type="component" value="Chromosome 16"/>
</dbReference>
<dbReference type="Bgee" id="ENSRNOG00000030102">
    <property type="expression patterns" value="Expressed in stomach and 7 other cell types or tissues"/>
</dbReference>
<dbReference type="GO" id="GO:0005783">
    <property type="term" value="C:endoplasmic reticulum"/>
    <property type="evidence" value="ECO:0000250"/>
    <property type="project" value="UniProtKB"/>
</dbReference>
<dbReference type="GO" id="GO:0005789">
    <property type="term" value="C:endoplasmic reticulum membrane"/>
    <property type="evidence" value="ECO:0000250"/>
    <property type="project" value="UniProtKB"/>
</dbReference>
<dbReference type="GO" id="GO:0016747">
    <property type="term" value="F:acyltransferase activity, transferring groups other than amino-acyl groups"/>
    <property type="evidence" value="ECO:0000266"/>
    <property type="project" value="RGD"/>
</dbReference>
<dbReference type="GO" id="GO:0016412">
    <property type="term" value="F:serine O-acyltransferase activity"/>
    <property type="evidence" value="ECO:0000314"/>
    <property type="project" value="UniProtKB"/>
</dbReference>
<dbReference type="GO" id="GO:0030258">
    <property type="term" value="P:lipid modification"/>
    <property type="evidence" value="ECO:0000318"/>
    <property type="project" value="GO_Central"/>
</dbReference>
<dbReference type="GO" id="GO:0018191">
    <property type="term" value="P:peptidyl-serine octanoylation"/>
    <property type="evidence" value="ECO:0000314"/>
    <property type="project" value="UniProtKB"/>
</dbReference>
<dbReference type="InterPro" id="IPR049941">
    <property type="entry name" value="LPLAT_7/PORCN-like"/>
</dbReference>
<dbReference type="InterPro" id="IPR004299">
    <property type="entry name" value="MBOAT_fam"/>
</dbReference>
<dbReference type="PANTHER" id="PTHR13906:SF3">
    <property type="entry name" value="GHRELIN O-ACYLTRANSFERASE"/>
    <property type="match status" value="1"/>
</dbReference>
<dbReference type="PANTHER" id="PTHR13906">
    <property type="entry name" value="PORCUPINE"/>
    <property type="match status" value="1"/>
</dbReference>
<dbReference type="Pfam" id="PF03062">
    <property type="entry name" value="MBOAT"/>
    <property type="match status" value="1"/>
</dbReference>
<name>MBOA4_RAT</name>
<feature type="chain" id="PRO_0000347277" description="Membrane-bound ghrelin O-acyltransferase MBOAT4">
    <location>
        <begin position="1"/>
        <end position="435"/>
    </location>
</feature>
<feature type="topological domain" description="Lumenal" evidence="6">
    <location>
        <begin position="1"/>
        <end position="5"/>
    </location>
</feature>
<feature type="transmembrane region" description="Helical" evidence="1 3">
    <location>
        <begin position="6"/>
        <end position="26"/>
    </location>
</feature>
<feature type="topological domain" description="Cytoplasmic" evidence="6">
    <location>
        <begin position="27"/>
        <end position="40"/>
    </location>
</feature>
<feature type="transmembrane region" description="Helical" evidence="1 3">
    <location>
        <begin position="41"/>
        <end position="56"/>
    </location>
</feature>
<feature type="topological domain" description="Lumenal" evidence="6">
    <location>
        <begin position="57"/>
        <end position="59"/>
    </location>
</feature>
<feature type="transmembrane region" description="Helical" evidence="1">
    <location>
        <begin position="60"/>
        <end position="76"/>
    </location>
</feature>
<feature type="topological domain" description="Cytoplasmic" evidence="6">
    <location>
        <begin position="77"/>
        <end position="82"/>
    </location>
</feature>
<feature type="transmembrane region" description="Helical" evidence="1">
    <location>
        <begin position="83"/>
        <end position="101"/>
    </location>
</feature>
<feature type="topological domain" description="Lumenal" evidence="6">
    <location>
        <begin position="102"/>
        <end position="120"/>
    </location>
</feature>
<feature type="transmembrane region" description="Helical" evidence="1">
    <location>
        <begin position="121"/>
        <end position="136"/>
    </location>
</feature>
<feature type="topological domain" description="Cytoplasmic" evidence="6">
    <location>
        <begin position="137"/>
        <end position="206"/>
    </location>
</feature>
<feature type="transmembrane region" description="Helical" evidence="1">
    <location>
        <begin position="207"/>
        <end position="227"/>
    </location>
</feature>
<feature type="topological domain" description="Lumenal" evidence="6">
    <location>
        <begin position="228"/>
        <end position="240"/>
    </location>
</feature>
<feature type="transmembrane region" description="Helical" evidence="1 3">
    <location>
        <begin position="241"/>
        <end position="261"/>
    </location>
</feature>
<feature type="topological domain" description="Cytoplasmic" evidence="6">
    <location>
        <begin position="262"/>
        <end position="324"/>
    </location>
</feature>
<feature type="transmembrane region" description="Helical" evidence="1">
    <location>
        <begin position="325"/>
        <end position="338"/>
    </location>
</feature>
<feature type="topological domain" description="Lumenal" evidence="6">
    <location>
        <begin position="339"/>
        <end position="340"/>
    </location>
</feature>
<feature type="transmembrane region" description="Helical" evidence="1">
    <location>
        <begin position="341"/>
        <end position="357"/>
    </location>
</feature>
<feature type="topological domain" description="Cytoplasmic" evidence="6">
    <location>
        <begin position="358"/>
        <end position="376"/>
    </location>
</feature>
<feature type="transmembrane region" description="Helical" evidence="3">
    <location>
        <begin position="377"/>
        <end position="397"/>
    </location>
</feature>
<feature type="topological domain" description="Lumenal" evidence="6">
    <location>
        <begin position="398"/>
        <end position="407"/>
    </location>
</feature>
<feature type="transmembrane region" description="Helical" evidence="3">
    <location>
        <begin position="408"/>
        <end position="428"/>
    </location>
</feature>
<feature type="topological domain" description="Cytoplasmic" evidence="6">
    <location>
        <begin position="429"/>
        <end position="435"/>
    </location>
</feature>
<feature type="active site" evidence="1">
    <location>
        <position position="307"/>
    </location>
</feature>
<feature type="active site" evidence="1">
    <location>
        <position position="338"/>
    </location>
</feature>
<organism>
    <name type="scientific">Rattus norvegicus</name>
    <name type="common">Rat</name>
    <dbReference type="NCBI Taxonomy" id="10116"/>
    <lineage>
        <taxon>Eukaryota</taxon>
        <taxon>Metazoa</taxon>
        <taxon>Chordata</taxon>
        <taxon>Craniata</taxon>
        <taxon>Vertebrata</taxon>
        <taxon>Euteleostomi</taxon>
        <taxon>Mammalia</taxon>
        <taxon>Eutheria</taxon>
        <taxon>Euarchontoglires</taxon>
        <taxon>Glires</taxon>
        <taxon>Rodentia</taxon>
        <taxon>Myomorpha</taxon>
        <taxon>Muroidea</taxon>
        <taxon>Muridae</taxon>
        <taxon>Murinae</taxon>
        <taxon>Rattus</taxon>
    </lineage>
</organism>
<proteinExistence type="evidence at protein level"/>